<gene>
    <name evidence="1" type="primary">obg</name>
    <name type="ordered locus">Rru_A1240</name>
</gene>
<name>OBG_RHORT</name>
<accession>Q2RV04</accession>
<evidence type="ECO:0000255" key="1">
    <source>
        <dbReference type="HAMAP-Rule" id="MF_01454"/>
    </source>
</evidence>
<evidence type="ECO:0000255" key="2">
    <source>
        <dbReference type="PROSITE-ProRule" id="PRU01231"/>
    </source>
</evidence>
<evidence type="ECO:0000256" key="3">
    <source>
        <dbReference type="SAM" id="MobiDB-lite"/>
    </source>
</evidence>
<protein>
    <recommendedName>
        <fullName evidence="1">GTPase Obg</fullName>
        <ecNumber evidence="1">3.6.5.-</ecNumber>
    </recommendedName>
    <alternativeName>
        <fullName evidence="1">GTP-binding protein Obg</fullName>
    </alternativeName>
</protein>
<comment type="function">
    <text evidence="1">An essential GTPase which binds GTP, GDP and possibly (p)ppGpp with moderate affinity, with high nucleotide exchange rates and a fairly low GTP hydrolysis rate. Plays a role in control of the cell cycle, stress response, ribosome biogenesis and in those bacteria that undergo differentiation, in morphogenesis control.</text>
</comment>
<comment type="cofactor">
    <cofactor evidence="1">
        <name>Mg(2+)</name>
        <dbReference type="ChEBI" id="CHEBI:18420"/>
    </cofactor>
</comment>
<comment type="subunit">
    <text evidence="1">Monomer.</text>
</comment>
<comment type="subcellular location">
    <subcellularLocation>
        <location evidence="1">Cytoplasm</location>
    </subcellularLocation>
</comment>
<comment type="similarity">
    <text evidence="1">Belongs to the TRAFAC class OBG-HflX-like GTPase superfamily. OBG GTPase family.</text>
</comment>
<dbReference type="EC" id="3.6.5.-" evidence="1"/>
<dbReference type="EMBL" id="CP000230">
    <property type="protein sequence ID" value="ABC22041.1"/>
    <property type="molecule type" value="Genomic_DNA"/>
</dbReference>
<dbReference type="RefSeq" id="YP_426328.1">
    <property type="nucleotide sequence ID" value="NC_007643.1"/>
</dbReference>
<dbReference type="SMR" id="Q2RV04"/>
<dbReference type="STRING" id="269796.Rru_A1240"/>
<dbReference type="EnsemblBacteria" id="ABC22041">
    <property type="protein sequence ID" value="ABC22041"/>
    <property type="gene ID" value="Rru_A1240"/>
</dbReference>
<dbReference type="KEGG" id="rru:Rru_A1240"/>
<dbReference type="PATRIC" id="fig|269796.9.peg.1305"/>
<dbReference type="eggNOG" id="COG0536">
    <property type="taxonomic scope" value="Bacteria"/>
</dbReference>
<dbReference type="HOGENOM" id="CLU_011747_2_0_5"/>
<dbReference type="PhylomeDB" id="Q2RV04"/>
<dbReference type="Proteomes" id="UP000001929">
    <property type="component" value="Chromosome"/>
</dbReference>
<dbReference type="GO" id="GO:0005737">
    <property type="term" value="C:cytoplasm"/>
    <property type="evidence" value="ECO:0007669"/>
    <property type="project" value="UniProtKB-SubCell"/>
</dbReference>
<dbReference type="GO" id="GO:0005525">
    <property type="term" value="F:GTP binding"/>
    <property type="evidence" value="ECO:0007669"/>
    <property type="project" value="UniProtKB-UniRule"/>
</dbReference>
<dbReference type="GO" id="GO:0003924">
    <property type="term" value="F:GTPase activity"/>
    <property type="evidence" value="ECO:0007669"/>
    <property type="project" value="UniProtKB-UniRule"/>
</dbReference>
<dbReference type="GO" id="GO:0000287">
    <property type="term" value="F:magnesium ion binding"/>
    <property type="evidence" value="ECO:0007669"/>
    <property type="project" value="InterPro"/>
</dbReference>
<dbReference type="GO" id="GO:0042254">
    <property type="term" value="P:ribosome biogenesis"/>
    <property type="evidence" value="ECO:0007669"/>
    <property type="project" value="UniProtKB-UniRule"/>
</dbReference>
<dbReference type="CDD" id="cd01898">
    <property type="entry name" value="Obg"/>
    <property type="match status" value="1"/>
</dbReference>
<dbReference type="FunFam" id="2.70.210.12:FF:000001">
    <property type="entry name" value="GTPase Obg"/>
    <property type="match status" value="1"/>
</dbReference>
<dbReference type="Gene3D" id="2.70.210.12">
    <property type="entry name" value="GTP1/OBG domain"/>
    <property type="match status" value="1"/>
</dbReference>
<dbReference type="Gene3D" id="3.40.50.300">
    <property type="entry name" value="P-loop containing nucleotide triphosphate hydrolases"/>
    <property type="match status" value="1"/>
</dbReference>
<dbReference type="HAMAP" id="MF_01454">
    <property type="entry name" value="GTPase_Obg"/>
    <property type="match status" value="1"/>
</dbReference>
<dbReference type="InterPro" id="IPR031167">
    <property type="entry name" value="G_OBG"/>
</dbReference>
<dbReference type="InterPro" id="IPR006073">
    <property type="entry name" value="GTP-bd"/>
</dbReference>
<dbReference type="InterPro" id="IPR014100">
    <property type="entry name" value="GTP-bd_Obg/CgtA"/>
</dbReference>
<dbReference type="InterPro" id="IPR006074">
    <property type="entry name" value="GTP1-OBG_CS"/>
</dbReference>
<dbReference type="InterPro" id="IPR006169">
    <property type="entry name" value="GTP1_OBG_dom"/>
</dbReference>
<dbReference type="InterPro" id="IPR036726">
    <property type="entry name" value="GTP1_OBG_dom_sf"/>
</dbReference>
<dbReference type="InterPro" id="IPR045086">
    <property type="entry name" value="OBG_GTPase"/>
</dbReference>
<dbReference type="InterPro" id="IPR027417">
    <property type="entry name" value="P-loop_NTPase"/>
</dbReference>
<dbReference type="NCBIfam" id="TIGR02729">
    <property type="entry name" value="Obg_CgtA"/>
    <property type="match status" value="1"/>
</dbReference>
<dbReference type="NCBIfam" id="NF008955">
    <property type="entry name" value="PRK12297.1"/>
    <property type="match status" value="1"/>
</dbReference>
<dbReference type="NCBIfam" id="NF008956">
    <property type="entry name" value="PRK12299.1"/>
    <property type="match status" value="1"/>
</dbReference>
<dbReference type="PANTHER" id="PTHR11702">
    <property type="entry name" value="DEVELOPMENTALLY REGULATED GTP-BINDING PROTEIN-RELATED"/>
    <property type="match status" value="1"/>
</dbReference>
<dbReference type="PANTHER" id="PTHR11702:SF31">
    <property type="entry name" value="MITOCHONDRIAL RIBOSOME-ASSOCIATED GTPASE 2"/>
    <property type="match status" value="1"/>
</dbReference>
<dbReference type="Pfam" id="PF01018">
    <property type="entry name" value="GTP1_OBG"/>
    <property type="match status" value="1"/>
</dbReference>
<dbReference type="Pfam" id="PF01926">
    <property type="entry name" value="MMR_HSR1"/>
    <property type="match status" value="1"/>
</dbReference>
<dbReference type="PIRSF" id="PIRSF002401">
    <property type="entry name" value="GTP_bd_Obg/CgtA"/>
    <property type="match status" value="1"/>
</dbReference>
<dbReference type="PRINTS" id="PR00326">
    <property type="entry name" value="GTP1OBG"/>
</dbReference>
<dbReference type="SUPFAM" id="SSF82051">
    <property type="entry name" value="Obg GTP-binding protein N-terminal domain"/>
    <property type="match status" value="1"/>
</dbReference>
<dbReference type="SUPFAM" id="SSF52540">
    <property type="entry name" value="P-loop containing nucleoside triphosphate hydrolases"/>
    <property type="match status" value="1"/>
</dbReference>
<dbReference type="PROSITE" id="PS51710">
    <property type="entry name" value="G_OBG"/>
    <property type="match status" value="1"/>
</dbReference>
<dbReference type="PROSITE" id="PS00905">
    <property type="entry name" value="GTP1_OBG"/>
    <property type="match status" value="1"/>
</dbReference>
<dbReference type="PROSITE" id="PS51883">
    <property type="entry name" value="OBG"/>
    <property type="match status" value="1"/>
</dbReference>
<feature type="chain" id="PRO_0000386197" description="GTPase Obg">
    <location>
        <begin position="1"/>
        <end position="391"/>
    </location>
</feature>
<feature type="domain" description="Obg" evidence="2">
    <location>
        <begin position="1"/>
        <end position="159"/>
    </location>
</feature>
<feature type="domain" description="OBG-type G" evidence="1">
    <location>
        <begin position="160"/>
        <end position="327"/>
    </location>
</feature>
<feature type="region of interest" description="Disordered" evidence="3">
    <location>
        <begin position="352"/>
        <end position="391"/>
    </location>
</feature>
<feature type="compositionally biased region" description="Acidic residues" evidence="3">
    <location>
        <begin position="366"/>
        <end position="382"/>
    </location>
</feature>
<feature type="binding site" evidence="1">
    <location>
        <begin position="166"/>
        <end position="173"/>
    </location>
    <ligand>
        <name>GTP</name>
        <dbReference type="ChEBI" id="CHEBI:37565"/>
    </ligand>
</feature>
<feature type="binding site" evidence="1">
    <location>
        <position position="173"/>
    </location>
    <ligand>
        <name>Mg(2+)</name>
        <dbReference type="ChEBI" id="CHEBI:18420"/>
    </ligand>
</feature>
<feature type="binding site" evidence="1">
    <location>
        <begin position="191"/>
        <end position="195"/>
    </location>
    <ligand>
        <name>GTP</name>
        <dbReference type="ChEBI" id="CHEBI:37565"/>
    </ligand>
</feature>
<feature type="binding site" evidence="1">
    <location>
        <position position="193"/>
    </location>
    <ligand>
        <name>Mg(2+)</name>
        <dbReference type="ChEBI" id="CHEBI:18420"/>
    </ligand>
</feature>
<feature type="binding site" evidence="1">
    <location>
        <begin position="212"/>
        <end position="215"/>
    </location>
    <ligand>
        <name>GTP</name>
        <dbReference type="ChEBI" id="CHEBI:37565"/>
    </ligand>
</feature>
<feature type="binding site" evidence="1">
    <location>
        <begin position="279"/>
        <end position="282"/>
    </location>
    <ligand>
        <name>GTP</name>
        <dbReference type="ChEBI" id="CHEBI:37565"/>
    </ligand>
</feature>
<feature type="binding site" evidence="1">
    <location>
        <begin position="308"/>
        <end position="310"/>
    </location>
    <ligand>
        <name>GTP</name>
        <dbReference type="ChEBI" id="CHEBI:37565"/>
    </ligand>
</feature>
<sequence length="391" mass="41848">MKFLDQAKIFVKSGDGGNGCVAFRREKNIEFGGPDGGHGGRGADVIVEAVPNLNTLIDFRYQQHFKAARGRDGSGDNRTGKSGEATIIKVPVGTQIFEDDRKTLIADLSRPGQRVRLAKGGDGGFGNAHYKSSTNQAPRRADPGWPGQEIWVWLRLKLIADAGLIGLPNAGKSTLLAAVTRARPKIADYPFTTLHPNLGVVHQDAREFIIADIPGLIEGAHEGAGLGTRFLGHVERCAVLLHMIDATQDDVAGAWRTVRAELKGHGQGLDEKSEIVGLSKIDALPPEDIAAKIAELSEACGAPVMAFSAISGKGLADVLRVMATHVDEARALRHARGEAEGDASDEAMRDVTGIDHGYNRPSAVVDWEDAPFDDDDDDDGDESGDKGQWTR</sequence>
<organism>
    <name type="scientific">Rhodospirillum rubrum (strain ATCC 11170 / ATH 1.1.1 / DSM 467 / LMG 4362 / NCIMB 8255 / S1)</name>
    <dbReference type="NCBI Taxonomy" id="269796"/>
    <lineage>
        <taxon>Bacteria</taxon>
        <taxon>Pseudomonadati</taxon>
        <taxon>Pseudomonadota</taxon>
        <taxon>Alphaproteobacteria</taxon>
        <taxon>Rhodospirillales</taxon>
        <taxon>Rhodospirillaceae</taxon>
        <taxon>Rhodospirillum</taxon>
    </lineage>
</organism>
<keyword id="KW-0963">Cytoplasm</keyword>
<keyword id="KW-0342">GTP-binding</keyword>
<keyword id="KW-0378">Hydrolase</keyword>
<keyword id="KW-0460">Magnesium</keyword>
<keyword id="KW-0479">Metal-binding</keyword>
<keyword id="KW-0547">Nucleotide-binding</keyword>
<keyword id="KW-1185">Reference proteome</keyword>
<reference key="1">
    <citation type="journal article" date="2011" name="Stand. Genomic Sci.">
        <title>Complete genome sequence of Rhodospirillum rubrum type strain (S1).</title>
        <authorList>
            <person name="Munk A.C."/>
            <person name="Copeland A."/>
            <person name="Lucas S."/>
            <person name="Lapidus A."/>
            <person name="Del Rio T.G."/>
            <person name="Barry K."/>
            <person name="Detter J.C."/>
            <person name="Hammon N."/>
            <person name="Israni S."/>
            <person name="Pitluck S."/>
            <person name="Brettin T."/>
            <person name="Bruce D."/>
            <person name="Han C."/>
            <person name="Tapia R."/>
            <person name="Gilna P."/>
            <person name="Schmutz J."/>
            <person name="Larimer F."/>
            <person name="Land M."/>
            <person name="Kyrpides N.C."/>
            <person name="Mavromatis K."/>
            <person name="Richardson P."/>
            <person name="Rohde M."/>
            <person name="Goeker M."/>
            <person name="Klenk H.P."/>
            <person name="Zhang Y."/>
            <person name="Roberts G.P."/>
            <person name="Reslewic S."/>
            <person name="Schwartz D.C."/>
        </authorList>
    </citation>
    <scope>NUCLEOTIDE SEQUENCE [LARGE SCALE GENOMIC DNA]</scope>
    <source>
        <strain>ATCC 11170 / ATH 1.1.1 / DSM 467 / LMG 4362 / NCIMB 8255 / S1</strain>
    </source>
</reference>
<proteinExistence type="inferred from homology"/>